<protein>
    <recommendedName>
        <fullName evidence="1">3-dehydroquinate synthase</fullName>
        <shortName evidence="1">DHQS</shortName>
        <ecNumber evidence="1">4.2.3.4</ecNumber>
    </recommendedName>
</protein>
<accession>Q5ZX00</accession>
<gene>
    <name evidence="1" type="primary">aroB</name>
    <name type="ordered locus">lpg0933</name>
</gene>
<organism>
    <name type="scientific">Legionella pneumophila subsp. pneumophila (strain Philadelphia 1 / ATCC 33152 / DSM 7513)</name>
    <dbReference type="NCBI Taxonomy" id="272624"/>
    <lineage>
        <taxon>Bacteria</taxon>
        <taxon>Pseudomonadati</taxon>
        <taxon>Pseudomonadota</taxon>
        <taxon>Gammaproteobacteria</taxon>
        <taxon>Legionellales</taxon>
        <taxon>Legionellaceae</taxon>
        <taxon>Legionella</taxon>
    </lineage>
</organism>
<evidence type="ECO:0000255" key="1">
    <source>
        <dbReference type="HAMAP-Rule" id="MF_00110"/>
    </source>
</evidence>
<sequence length="369" mass="40961">MAKFELYAEVDVSISGHQYPIIICRNGLIDPELINRFITSKQVLIVTNRTVAPLYLGHLQSVLPSKQCDVVILEDGEEHKNQRSLFTIYDSLIQNKHHRDTSIIALGGGVIGDMAGFAASTYQRGVRFIQLPTTLLAQVDASVGGKTAINHPAGKNMIGSFYQPQAVIIDLNTLKTLPEREFRAGIAEMIKYALLVGGSFFERIQEALQQGLTVHSPELPLLIAECCQVKAKIVEQDERESGLRALLNLGHTFAHALETYTDYKKWLHGEAVAIGLYCAAVLSEKKGLLDKPIVDQVEKMLIHAGLPHKIPNSIDLIQLRELMSLDKKIKNNCLRFVMIKKPGACYIDDSVTEDCLHNALINVVEGERK</sequence>
<reference key="1">
    <citation type="journal article" date="2004" name="Science">
        <title>The genomic sequence of the accidental pathogen Legionella pneumophila.</title>
        <authorList>
            <person name="Chien M."/>
            <person name="Morozova I."/>
            <person name="Shi S."/>
            <person name="Sheng H."/>
            <person name="Chen J."/>
            <person name="Gomez S.M."/>
            <person name="Asamani G."/>
            <person name="Hill K."/>
            <person name="Nuara J."/>
            <person name="Feder M."/>
            <person name="Rineer J."/>
            <person name="Greenberg J.J."/>
            <person name="Steshenko V."/>
            <person name="Park S.H."/>
            <person name="Zhao B."/>
            <person name="Teplitskaya E."/>
            <person name="Edwards J.R."/>
            <person name="Pampou S."/>
            <person name="Georghiou A."/>
            <person name="Chou I.-C."/>
            <person name="Iannuccilli W."/>
            <person name="Ulz M.E."/>
            <person name="Kim D.H."/>
            <person name="Geringer-Sameth A."/>
            <person name="Goldsberry C."/>
            <person name="Morozov P."/>
            <person name="Fischer S.G."/>
            <person name="Segal G."/>
            <person name="Qu X."/>
            <person name="Rzhetsky A."/>
            <person name="Zhang P."/>
            <person name="Cayanis E."/>
            <person name="De Jong P.J."/>
            <person name="Ju J."/>
            <person name="Kalachikov S."/>
            <person name="Shuman H.A."/>
            <person name="Russo J.J."/>
        </authorList>
    </citation>
    <scope>NUCLEOTIDE SEQUENCE [LARGE SCALE GENOMIC DNA]</scope>
    <source>
        <strain>Philadelphia 1 / ATCC 33152 / DSM 7513</strain>
    </source>
</reference>
<keyword id="KW-0028">Amino-acid biosynthesis</keyword>
<keyword id="KW-0057">Aromatic amino acid biosynthesis</keyword>
<keyword id="KW-0170">Cobalt</keyword>
<keyword id="KW-0963">Cytoplasm</keyword>
<keyword id="KW-0456">Lyase</keyword>
<keyword id="KW-0479">Metal-binding</keyword>
<keyword id="KW-0520">NAD</keyword>
<keyword id="KW-0547">Nucleotide-binding</keyword>
<keyword id="KW-1185">Reference proteome</keyword>
<keyword id="KW-0862">Zinc</keyword>
<proteinExistence type="inferred from homology"/>
<dbReference type="EC" id="4.2.3.4" evidence="1"/>
<dbReference type="EMBL" id="AE017354">
    <property type="protein sequence ID" value="AAU27020.1"/>
    <property type="molecule type" value="Genomic_DNA"/>
</dbReference>
<dbReference type="RefSeq" id="WP_010946668.1">
    <property type="nucleotide sequence ID" value="NC_002942.5"/>
</dbReference>
<dbReference type="RefSeq" id="YP_094967.1">
    <property type="nucleotide sequence ID" value="NC_002942.5"/>
</dbReference>
<dbReference type="SMR" id="Q5ZX00"/>
<dbReference type="STRING" id="272624.lpg0933"/>
<dbReference type="PaxDb" id="272624-lpg0933"/>
<dbReference type="GeneID" id="57034921"/>
<dbReference type="KEGG" id="lpn:lpg0933"/>
<dbReference type="PATRIC" id="fig|272624.6.peg.965"/>
<dbReference type="eggNOG" id="COG0337">
    <property type="taxonomic scope" value="Bacteria"/>
</dbReference>
<dbReference type="HOGENOM" id="CLU_001201_0_2_6"/>
<dbReference type="OrthoDB" id="9806583at2"/>
<dbReference type="UniPathway" id="UPA00053">
    <property type="reaction ID" value="UER00085"/>
</dbReference>
<dbReference type="Proteomes" id="UP000000609">
    <property type="component" value="Chromosome"/>
</dbReference>
<dbReference type="GO" id="GO:0005737">
    <property type="term" value="C:cytoplasm"/>
    <property type="evidence" value="ECO:0007669"/>
    <property type="project" value="UniProtKB-SubCell"/>
</dbReference>
<dbReference type="GO" id="GO:0003856">
    <property type="term" value="F:3-dehydroquinate synthase activity"/>
    <property type="evidence" value="ECO:0007669"/>
    <property type="project" value="UniProtKB-UniRule"/>
</dbReference>
<dbReference type="GO" id="GO:0046872">
    <property type="term" value="F:metal ion binding"/>
    <property type="evidence" value="ECO:0007669"/>
    <property type="project" value="UniProtKB-KW"/>
</dbReference>
<dbReference type="GO" id="GO:0000166">
    <property type="term" value="F:nucleotide binding"/>
    <property type="evidence" value="ECO:0007669"/>
    <property type="project" value="UniProtKB-KW"/>
</dbReference>
<dbReference type="GO" id="GO:0008652">
    <property type="term" value="P:amino acid biosynthetic process"/>
    <property type="evidence" value="ECO:0007669"/>
    <property type="project" value="UniProtKB-KW"/>
</dbReference>
<dbReference type="GO" id="GO:0009073">
    <property type="term" value="P:aromatic amino acid family biosynthetic process"/>
    <property type="evidence" value="ECO:0007669"/>
    <property type="project" value="UniProtKB-KW"/>
</dbReference>
<dbReference type="GO" id="GO:0009423">
    <property type="term" value="P:chorismate biosynthetic process"/>
    <property type="evidence" value="ECO:0007669"/>
    <property type="project" value="UniProtKB-UniRule"/>
</dbReference>
<dbReference type="CDD" id="cd08195">
    <property type="entry name" value="DHQS"/>
    <property type="match status" value="1"/>
</dbReference>
<dbReference type="FunFam" id="3.40.50.1970:FF:000001">
    <property type="entry name" value="3-dehydroquinate synthase"/>
    <property type="match status" value="1"/>
</dbReference>
<dbReference type="Gene3D" id="3.40.50.1970">
    <property type="match status" value="1"/>
</dbReference>
<dbReference type="Gene3D" id="1.20.1090.10">
    <property type="entry name" value="Dehydroquinate synthase-like - alpha domain"/>
    <property type="match status" value="1"/>
</dbReference>
<dbReference type="HAMAP" id="MF_00110">
    <property type="entry name" value="DHQ_synthase"/>
    <property type="match status" value="1"/>
</dbReference>
<dbReference type="InterPro" id="IPR050071">
    <property type="entry name" value="Dehydroquinate_synthase"/>
</dbReference>
<dbReference type="InterPro" id="IPR016037">
    <property type="entry name" value="DHQ_synth_AroB"/>
</dbReference>
<dbReference type="InterPro" id="IPR030963">
    <property type="entry name" value="DHQ_synth_fam"/>
</dbReference>
<dbReference type="InterPro" id="IPR030960">
    <property type="entry name" value="DHQS/DOIS_N"/>
</dbReference>
<dbReference type="InterPro" id="IPR056179">
    <property type="entry name" value="DHQS_C"/>
</dbReference>
<dbReference type="NCBIfam" id="TIGR01357">
    <property type="entry name" value="aroB"/>
    <property type="match status" value="1"/>
</dbReference>
<dbReference type="PANTHER" id="PTHR43622">
    <property type="entry name" value="3-DEHYDROQUINATE SYNTHASE"/>
    <property type="match status" value="1"/>
</dbReference>
<dbReference type="PANTHER" id="PTHR43622:SF7">
    <property type="entry name" value="3-DEHYDROQUINATE SYNTHASE, CHLOROPLASTIC"/>
    <property type="match status" value="1"/>
</dbReference>
<dbReference type="Pfam" id="PF01761">
    <property type="entry name" value="DHQ_synthase"/>
    <property type="match status" value="1"/>
</dbReference>
<dbReference type="Pfam" id="PF24621">
    <property type="entry name" value="DHQS_C"/>
    <property type="match status" value="1"/>
</dbReference>
<dbReference type="PIRSF" id="PIRSF001455">
    <property type="entry name" value="DHQ_synth"/>
    <property type="match status" value="1"/>
</dbReference>
<dbReference type="SUPFAM" id="SSF56796">
    <property type="entry name" value="Dehydroquinate synthase-like"/>
    <property type="match status" value="1"/>
</dbReference>
<comment type="function">
    <text evidence="1">Catalyzes the conversion of 3-deoxy-D-arabino-heptulosonate 7-phosphate (DAHP) to dehydroquinate (DHQ).</text>
</comment>
<comment type="catalytic activity">
    <reaction evidence="1">
        <text>7-phospho-2-dehydro-3-deoxy-D-arabino-heptonate = 3-dehydroquinate + phosphate</text>
        <dbReference type="Rhea" id="RHEA:21968"/>
        <dbReference type="ChEBI" id="CHEBI:32364"/>
        <dbReference type="ChEBI" id="CHEBI:43474"/>
        <dbReference type="ChEBI" id="CHEBI:58394"/>
        <dbReference type="EC" id="4.2.3.4"/>
    </reaction>
</comment>
<comment type="cofactor">
    <cofactor evidence="1">
        <name>Co(2+)</name>
        <dbReference type="ChEBI" id="CHEBI:48828"/>
    </cofactor>
    <cofactor evidence="1">
        <name>Zn(2+)</name>
        <dbReference type="ChEBI" id="CHEBI:29105"/>
    </cofactor>
    <text evidence="1">Binds 1 divalent metal cation per subunit. Can use either Co(2+) or Zn(2+).</text>
</comment>
<comment type="cofactor">
    <cofactor evidence="1">
        <name>NAD(+)</name>
        <dbReference type="ChEBI" id="CHEBI:57540"/>
    </cofactor>
</comment>
<comment type="pathway">
    <text evidence="1">Metabolic intermediate biosynthesis; chorismate biosynthesis; chorismate from D-erythrose 4-phosphate and phosphoenolpyruvate: step 2/7.</text>
</comment>
<comment type="subcellular location">
    <subcellularLocation>
        <location evidence="1">Cytoplasm</location>
    </subcellularLocation>
</comment>
<comment type="similarity">
    <text evidence="1">Belongs to the sugar phosphate cyclases superfamily. Dehydroquinate synthase family.</text>
</comment>
<name>AROB_LEGPH</name>
<feature type="chain" id="PRO_0000231096" description="3-dehydroquinate synthase">
    <location>
        <begin position="1"/>
        <end position="369"/>
    </location>
</feature>
<feature type="binding site" evidence="1">
    <location>
        <begin position="75"/>
        <end position="80"/>
    </location>
    <ligand>
        <name>NAD(+)</name>
        <dbReference type="ChEBI" id="CHEBI:57540"/>
    </ligand>
</feature>
<feature type="binding site" evidence="1">
    <location>
        <begin position="109"/>
        <end position="113"/>
    </location>
    <ligand>
        <name>NAD(+)</name>
        <dbReference type="ChEBI" id="CHEBI:57540"/>
    </ligand>
</feature>
<feature type="binding site" evidence="1">
    <location>
        <begin position="133"/>
        <end position="134"/>
    </location>
    <ligand>
        <name>NAD(+)</name>
        <dbReference type="ChEBI" id="CHEBI:57540"/>
    </ligand>
</feature>
<feature type="binding site" evidence="1">
    <location>
        <position position="146"/>
    </location>
    <ligand>
        <name>NAD(+)</name>
        <dbReference type="ChEBI" id="CHEBI:57540"/>
    </ligand>
</feature>
<feature type="binding site" evidence="1">
    <location>
        <position position="155"/>
    </location>
    <ligand>
        <name>NAD(+)</name>
        <dbReference type="ChEBI" id="CHEBI:57540"/>
    </ligand>
</feature>
<feature type="binding site" evidence="1">
    <location>
        <begin position="173"/>
        <end position="176"/>
    </location>
    <ligand>
        <name>NAD(+)</name>
        <dbReference type="ChEBI" id="CHEBI:57540"/>
    </ligand>
</feature>
<feature type="binding site" evidence="1">
    <location>
        <position position="188"/>
    </location>
    <ligand>
        <name>Zn(2+)</name>
        <dbReference type="ChEBI" id="CHEBI:29105"/>
    </ligand>
</feature>
<feature type="binding site" evidence="1">
    <location>
        <position position="251"/>
    </location>
    <ligand>
        <name>Zn(2+)</name>
        <dbReference type="ChEBI" id="CHEBI:29105"/>
    </ligand>
</feature>
<feature type="binding site" evidence="1">
    <location>
        <position position="268"/>
    </location>
    <ligand>
        <name>Zn(2+)</name>
        <dbReference type="ChEBI" id="CHEBI:29105"/>
    </ligand>
</feature>